<sequence>MAPPRCPAGLALLLLLLGACGFFQSYAVEVDVKDASNFTCLYAQWMMKFLIKYETNSSDYKNASLDLTSTVTHNGSICGSDTQAALLAVQFGDGHSWSINFTKNNETYRAEFITFTYNTNDTAVFPDARRQGPVTIVVKDAMHPIQLNNVFVCHHTTSLEAENVTQIFWNVTMQPFVQNGTISKKESRCYADTPTAAPTVLPTVANVTTASTTISPAPTTAPKPAENPVTGNYSLKTGNKTCLLATVGLQLNISQDKPLLINIDPKTTHADGTCGNTSATLKLNDGNRTLIDFTFIVNASASVQKFYLREVNVTLLNYQNGSVILSADNNNLSKWDASLGNSYMCRKEQTLEINENLQVHTFNLWVQPFLVKENKFSIAEECFADSDLNFLIPVAVGMALGFLIILVFISYIIGRRKSRTGYQSV</sequence>
<feature type="signal peptide" evidence="4">
    <location>
        <begin position="1"/>
        <end position="27"/>
    </location>
</feature>
<feature type="chain" id="PRO_0000017114" description="Lysosome-associated membrane glycoprotein 2">
    <location>
        <begin position="28"/>
        <end position="425"/>
    </location>
</feature>
<feature type="topological domain" description="Lumenal" evidence="4">
    <location>
        <begin position="28"/>
        <end position="389"/>
    </location>
</feature>
<feature type="transmembrane region" description="Helical" evidence="5">
    <location>
        <begin position="390"/>
        <end position="414"/>
    </location>
</feature>
<feature type="topological domain" description="Cytoplasmic" evidence="5">
    <location>
        <begin position="415"/>
        <end position="425"/>
    </location>
</feature>
<feature type="region of interest" description="First lumenal domain">
    <location>
        <begin position="28"/>
        <end position="192"/>
    </location>
</feature>
<feature type="region of interest" description="Hinge">
    <location>
        <begin position="193"/>
        <end position="238"/>
    </location>
</feature>
<feature type="region of interest" description="Second lumenal domain">
    <location>
        <begin position="239"/>
        <end position="390"/>
    </location>
</feature>
<feature type="region of interest" description="Important for binding and subsequent lysosomal degradation of target proteins" evidence="1">
    <location>
        <begin position="416"/>
        <end position="419"/>
    </location>
</feature>
<feature type="glycosylation site" description="N-linked (GlcNAc...) asparagine" evidence="4">
    <location>
        <position position="37"/>
    </location>
</feature>
<feature type="glycosylation site" description="N-linked (GlcNAc...) asparagine" evidence="4">
    <location>
        <position position="56"/>
    </location>
</feature>
<feature type="glycosylation site" description="N-linked (GlcNAc...) asparagine" evidence="4">
    <location>
        <position position="62"/>
    </location>
</feature>
<feature type="glycosylation site" description="N-linked (GlcNAc...) asparagine" evidence="4">
    <location>
        <position position="74"/>
    </location>
</feature>
<feature type="glycosylation site" description="N-linked (GlcNAc...) asparagine" evidence="4">
    <location>
        <position position="100"/>
    </location>
</feature>
<feature type="glycosylation site" description="N-linked (GlcNAc...) asparagine" evidence="4">
    <location>
        <position position="105"/>
    </location>
</feature>
<feature type="glycosylation site" description="N-linked (GlcNAc...) asparagine" evidence="4">
    <location>
        <position position="120"/>
    </location>
</feature>
<feature type="glycosylation site" description="N-linked (GlcNAc...) asparagine" evidence="4">
    <location>
        <position position="163"/>
    </location>
</feature>
<feature type="glycosylation site" description="N-linked (GlcNAc...) asparagine" evidence="4">
    <location>
        <position position="170"/>
    </location>
</feature>
<feature type="glycosylation site" description="N-linked (GlcNAc...) asparagine" evidence="4">
    <location>
        <position position="179"/>
    </location>
</feature>
<feature type="glycosylation site" description="N-linked (GlcNAc...) asparagine" evidence="4">
    <location>
        <position position="206"/>
    </location>
</feature>
<feature type="glycosylation site" description="N-linked (GlcNAc...) asparagine" evidence="4">
    <location>
        <position position="232"/>
    </location>
</feature>
<feature type="glycosylation site" description="N-linked (GlcNAc...) asparagine" evidence="4">
    <location>
        <position position="239"/>
    </location>
</feature>
<feature type="glycosylation site" description="N-linked (GlcNAc...) asparagine" evidence="4">
    <location>
        <position position="252"/>
    </location>
</feature>
<feature type="glycosylation site" description="N-linked (GlcNAc...) asparagine" evidence="4">
    <location>
        <position position="276"/>
    </location>
</feature>
<feature type="glycosylation site" description="N-linked (GlcNAc...) asparagine" evidence="4">
    <location>
        <position position="287"/>
    </location>
</feature>
<feature type="glycosylation site" description="N-linked (GlcNAc...) asparagine" evidence="4">
    <location>
        <position position="298"/>
    </location>
</feature>
<feature type="glycosylation site" description="N-linked (GlcNAc...) asparagine" evidence="4">
    <location>
        <position position="312"/>
    </location>
</feature>
<feature type="glycosylation site" description="N-linked (GlcNAc...) asparagine" evidence="4">
    <location>
        <position position="320"/>
    </location>
</feature>
<feature type="glycosylation site" description="N-linked (GlcNAc...) asparagine" evidence="4">
    <location>
        <position position="331"/>
    </location>
</feature>
<feature type="disulfide bond" evidence="5">
    <location>
        <begin position="40"/>
        <end position="78"/>
    </location>
</feature>
<feature type="disulfide bond" evidence="5">
    <location>
        <begin position="153"/>
        <end position="189"/>
    </location>
</feature>
<feature type="disulfide bond" evidence="5">
    <location>
        <begin position="242"/>
        <end position="274"/>
    </location>
</feature>
<feature type="disulfide bond" evidence="5">
    <location>
        <begin position="345"/>
        <end position="382"/>
    </location>
</feature>
<feature type="splice variant" id="VSP_003047" description="In isoform LAMP-2C." evidence="6">
    <original>EECFADSDLNFLIPVAVGMALGFLIILVFISYIIGRRKSRTGYQSV</original>
    <variation>QECSLDDDTILIPIVVGAALAGLIVIIVIAYIIGRRKSYAGYQTL</variation>
    <location>
        <begin position="380"/>
        <end position="425"/>
    </location>
</feature>
<feature type="splice variant" id="VSP_003048" description="In isoform LAMP-2A." evidence="6">
    <original>ECFADSDLNFLIPVAVGMALGFLIILVFISYIIGRRKSRTGYQSV</original>
    <variation>DCSPEVDYFIVPIAVGAALGGLVVLVIMAYFLGHKKHHNTGYEQF</variation>
    <location>
        <begin position="381"/>
        <end position="425"/>
    </location>
</feature>
<feature type="sequence conflict" description="In Ref. 1; AAA99539/AAA99541." evidence="7" ref="1">
    <original>I</original>
    <variation>L</variation>
    <location>
        <position position="261"/>
    </location>
</feature>
<feature type="sequence conflict" description="In Ref. 1; AAA99539/AAA99541." evidence="7" ref="1">
    <original>T</original>
    <variation>A</variation>
    <location>
        <position position="277"/>
    </location>
</feature>
<evidence type="ECO:0000250" key="1">
    <source>
        <dbReference type="UniProtKB" id="P13473"/>
    </source>
</evidence>
<evidence type="ECO:0000250" key="2">
    <source>
        <dbReference type="UniProtKB" id="P17046"/>
    </source>
</evidence>
<evidence type="ECO:0000250" key="3">
    <source>
        <dbReference type="UniProtKB" id="P17047"/>
    </source>
</evidence>
<evidence type="ECO:0000255" key="4"/>
<evidence type="ECO:0000255" key="5">
    <source>
        <dbReference type="PROSITE-ProRule" id="PRU00740"/>
    </source>
</evidence>
<evidence type="ECO:0000303" key="6">
    <source>
    </source>
</evidence>
<evidence type="ECO:0000305" key="7"/>
<reference key="1">
    <citation type="journal article" date="1995" name="DNA Cell Biol.">
        <title>The family of LAMP-2 proteins arises by alternative splicing from a single gene: characterization of the avian LAMP-2 gene and identification of mammalian homologs of LAMP-2b and LAMP-2c.</title>
        <authorList>
            <person name="Gough N.R."/>
            <person name="Hatem C.L."/>
            <person name="Fambrough D.M."/>
        </authorList>
    </citation>
    <scope>NUCLEOTIDE SEQUENCE [MRNA] (ISOFORMS LAMP-2A; LAMP-2B AND LAMP-2C)</scope>
    <source>
        <strain>White leghorn</strain>
        <tissue>Brain</tissue>
    </source>
</reference>
<keyword id="KW-0025">Alternative splicing</keyword>
<keyword id="KW-0072">Autophagy</keyword>
<keyword id="KW-1003">Cell membrane</keyword>
<keyword id="KW-0968">Cytoplasmic vesicle</keyword>
<keyword id="KW-1015">Disulfide bond</keyword>
<keyword id="KW-0967">Endosome</keyword>
<keyword id="KW-0325">Glycoprotein</keyword>
<keyword id="KW-0458">Lysosome</keyword>
<keyword id="KW-0472">Membrane</keyword>
<keyword id="KW-1185">Reference proteome</keyword>
<keyword id="KW-0732">Signal</keyword>
<keyword id="KW-0812">Transmembrane</keyword>
<keyword id="KW-1133">Transmembrane helix</keyword>
<protein>
    <recommendedName>
        <fullName>Lysosome-associated membrane glycoprotein 2</fullName>
        <shortName>LAMP-2</shortName>
        <shortName>Lysosome-associated membrane protein 2</shortName>
    </recommendedName>
</protein>
<name>LAMP2_CHICK</name>
<accession>Q90617</accession>
<accession>Q90616</accession>
<accession>Q90618</accession>
<proteinExistence type="evidence at transcript level"/>
<organism>
    <name type="scientific">Gallus gallus</name>
    <name type="common">Chicken</name>
    <dbReference type="NCBI Taxonomy" id="9031"/>
    <lineage>
        <taxon>Eukaryota</taxon>
        <taxon>Metazoa</taxon>
        <taxon>Chordata</taxon>
        <taxon>Craniata</taxon>
        <taxon>Vertebrata</taxon>
        <taxon>Euteleostomi</taxon>
        <taxon>Archelosauria</taxon>
        <taxon>Archosauria</taxon>
        <taxon>Dinosauria</taxon>
        <taxon>Saurischia</taxon>
        <taxon>Theropoda</taxon>
        <taxon>Coelurosauria</taxon>
        <taxon>Aves</taxon>
        <taxon>Neognathae</taxon>
        <taxon>Galloanserae</taxon>
        <taxon>Galliformes</taxon>
        <taxon>Phasianidae</taxon>
        <taxon>Phasianinae</taxon>
        <taxon>Gallus</taxon>
    </lineage>
</organism>
<gene>
    <name type="primary">LAMP2</name>
</gene>
<comment type="function">
    <text evidence="1 2">Lysosomal membrane glycoprotein which plays an important role in lysosome biogenesis, lysosomal pH regulation and autophagy. Plays an important role in chaperone-mediated autophagy, a process that mediates lysosomal degradation of proteins in response to various stresses and as part of the normal turnover of proteins with a long biological half-live. In the chaperone-mediated autophagy, acts downstream of chaperones, such as HSPA8/HSC70, which recognize and bind substrate proteins and mediate their recruitment to lysosomes, where target proteins bind LAMP2 (By similarity). Plays a role in lysosomal protein degradation in response to starvation (By similarity). Required for the fusion of autophagosomes with lysosomes during autophagy (By similarity).</text>
</comment>
<comment type="subunit">
    <text evidence="1 2">Monomer. Forms large homooligomers.</text>
</comment>
<comment type="subcellular location">
    <subcellularLocation>
        <location evidence="5">Lysosome membrane</location>
        <topology evidence="5">Single-pass type I membrane protein</topology>
    </subcellularLocation>
    <subcellularLocation>
        <location evidence="1">Endosome membrane</location>
        <topology evidence="5">Single-pass type I membrane protein</topology>
    </subcellularLocation>
    <subcellularLocation>
        <location evidence="1">Cell membrane</location>
        <topology evidence="5">Single-pass type I membrane protein</topology>
    </subcellularLocation>
    <subcellularLocation>
        <location evidence="3">Cytoplasmic vesicle</location>
        <location evidence="3">Autophagosome membrane</location>
    </subcellularLocation>
    <text evidence="1">This protein shuttles between lysosomes, endosomes, and the plasma membrane.</text>
</comment>
<comment type="alternative products">
    <event type="alternative splicing"/>
    <isoform>
        <id>Q90617-1</id>
        <name>LAMP-2B</name>
        <sequence type="displayed"/>
    </isoform>
    <isoform>
        <id>Q90617-2</id>
        <name>LAMP-2A</name>
        <sequence type="described" ref="VSP_003048"/>
    </isoform>
    <isoform>
        <id>Q90617-3</id>
        <name>LAMP-2C</name>
        <sequence type="described" ref="VSP_003047"/>
    </isoform>
</comment>
<comment type="PTM">
    <text evidence="2">Extensively N-glycosylated. Contains a minor proportion of O-linked glycans.</text>
</comment>
<comment type="similarity">
    <text evidence="5">Belongs to the LAMP family.</text>
</comment>
<dbReference type="EMBL" id="U10547">
    <property type="protein sequence ID" value="AAA99540.1"/>
    <property type="molecule type" value="mRNA"/>
</dbReference>
<dbReference type="EMBL" id="U10546">
    <property type="protein sequence ID" value="AAA99539.1"/>
    <property type="molecule type" value="mRNA"/>
</dbReference>
<dbReference type="EMBL" id="U10548">
    <property type="protein sequence ID" value="AAA99541.1"/>
    <property type="molecule type" value="mRNA"/>
</dbReference>
<dbReference type="RefSeq" id="NP_001001749.1">
    <molecule id="Q90617-1"/>
    <property type="nucleotide sequence ID" value="NM_001001749.1"/>
</dbReference>
<dbReference type="SMR" id="Q90617"/>
<dbReference type="FunCoup" id="Q90617">
    <property type="interactions" value="1152"/>
</dbReference>
<dbReference type="STRING" id="9031.ENSGALP00000068184"/>
<dbReference type="GlyCosmos" id="Q90617">
    <property type="glycosylation" value="20 sites, No reported glycans"/>
</dbReference>
<dbReference type="GlyGen" id="Q90617">
    <property type="glycosylation" value="20 sites"/>
</dbReference>
<dbReference type="PaxDb" id="9031-ENSGALP00000013946"/>
<dbReference type="GeneID" id="414800"/>
<dbReference type="KEGG" id="gga:414800"/>
<dbReference type="CTD" id="3920"/>
<dbReference type="VEuPathDB" id="HostDB:geneid_414800"/>
<dbReference type="eggNOG" id="KOG4818">
    <property type="taxonomic scope" value="Eukaryota"/>
</dbReference>
<dbReference type="HOGENOM" id="CLU_055379_2_0_1"/>
<dbReference type="InParanoid" id="Q90617"/>
<dbReference type="OrthoDB" id="6232933at2759"/>
<dbReference type="PhylomeDB" id="Q90617"/>
<dbReference type="TreeFam" id="TF316339"/>
<dbReference type="PRO" id="PR:Q90617"/>
<dbReference type="Proteomes" id="UP000000539">
    <property type="component" value="Unassembled WGS sequence"/>
</dbReference>
<dbReference type="GO" id="GO:0000421">
    <property type="term" value="C:autophagosome membrane"/>
    <property type="evidence" value="ECO:0000318"/>
    <property type="project" value="GO_Central"/>
</dbReference>
<dbReference type="GO" id="GO:0031902">
    <property type="term" value="C:late endosome membrane"/>
    <property type="evidence" value="ECO:0000318"/>
    <property type="project" value="GO_Central"/>
</dbReference>
<dbReference type="GO" id="GO:0005765">
    <property type="term" value="C:lysosomal membrane"/>
    <property type="evidence" value="ECO:0000318"/>
    <property type="project" value="GO_Central"/>
</dbReference>
<dbReference type="GO" id="GO:0005764">
    <property type="term" value="C:lysosome"/>
    <property type="evidence" value="ECO:0000250"/>
    <property type="project" value="UniProtKB"/>
</dbReference>
<dbReference type="GO" id="GO:0005886">
    <property type="term" value="C:plasma membrane"/>
    <property type="evidence" value="ECO:0000318"/>
    <property type="project" value="GO_Central"/>
</dbReference>
<dbReference type="GO" id="GO:0008200">
    <property type="term" value="F:ion channel inhibitor activity"/>
    <property type="evidence" value="ECO:0000250"/>
    <property type="project" value="UniProtKB"/>
</dbReference>
<dbReference type="GO" id="GO:0097352">
    <property type="term" value="P:autophagosome maturation"/>
    <property type="evidence" value="ECO:0000250"/>
    <property type="project" value="UniProtKB"/>
</dbReference>
<dbReference type="GO" id="GO:0009267">
    <property type="term" value="P:cellular response to starvation"/>
    <property type="evidence" value="ECO:0000250"/>
    <property type="project" value="UniProtKB"/>
</dbReference>
<dbReference type="GO" id="GO:0061684">
    <property type="term" value="P:chaperone-mediated autophagy"/>
    <property type="evidence" value="ECO:0000250"/>
    <property type="project" value="UniProtKB"/>
</dbReference>
<dbReference type="GO" id="GO:0007042">
    <property type="term" value="P:lysosomal lumen acidification"/>
    <property type="evidence" value="ECO:0000250"/>
    <property type="project" value="UniProtKB"/>
</dbReference>
<dbReference type="GO" id="GO:1905146">
    <property type="term" value="P:lysosomal protein catabolic process"/>
    <property type="evidence" value="ECO:0000250"/>
    <property type="project" value="UniProtKB"/>
</dbReference>
<dbReference type="GO" id="GO:0006605">
    <property type="term" value="P:protein targeting"/>
    <property type="evidence" value="ECO:0000250"/>
    <property type="project" value="UniProtKB"/>
</dbReference>
<dbReference type="GO" id="GO:0061740">
    <property type="term" value="P:protein targeting to lysosome involved in chaperone-mediated autophagy"/>
    <property type="evidence" value="ECO:0000250"/>
    <property type="project" value="UniProtKB"/>
</dbReference>
<dbReference type="FunFam" id="2.40.160.110:FF:000011">
    <property type="entry name" value="Lysosome-associated membrane glycoprotein 2"/>
    <property type="match status" value="1"/>
</dbReference>
<dbReference type="FunFam" id="2.40.160.110:FF:000001">
    <property type="entry name" value="lysosome-associated membrane glycoprotein 2 isoform X2"/>
    <property type="match status" value="1"/>
</dbReference>
<dbReference type="Gene3D" id="2.40.160.110">
    <property type="match status" value="2"/>
</dbReference>
<dbReference type="InterPro" id="IPR048528">
    <property type="entry name" value="Lamp2-like_luminal"/>
</dbReference>
<dbReference type="InterPro" id="IPR048524">
    <property type="entry name" value="Lamp2-like_TM"/>
</dbReference>
<dbReference type="InterPro" id="IPR018134">
    <property type="entry name" value="LAMP_CS"/>
</dbReference>
<dbReference type="InterPro" id="IPR002000">
    <property type="entry name" value="Lysosome-assoc_membr_glycop"/>
</dbReference>
<dbReference type="PANTHER" id="PTHR11506">
    <property type="entry name" value="LYSOSOME-ASSOCIATED MEMBRANE GLYCOPROTEIN"/>
    <property type="match status" value="1"/>
</dbReference>
<dbReference type="PANTHER" id="PTHR11506:SF35">
    <property type="entry name" value="LYSOSOME-ASSOCIATED MEMBRANE GLYCOPROTEIN 5"/>
    <property type="match status" value="1"/>
</dbReference>
<dbReference type="Pfam" id="PF01299">
    <property type="entry name" value="Lamp2-like_luminal"/>
    <property type="match status" value="1"/>
</dbReference>
<dbReference type="Pfam" id="PF21222">
    <property type="entry name" value="Lamp2_2nd"/>
    <property type="match status" value="1"/>
</dbReference>
<dbReference type="PRINTS" id="PR00336">
    <property type="entry name" value="LYSASSOCTDMP"/>
</dbReference>
<dbReference type="PROSITE" id="PS00310">
    <property type="entry name" value="LAMP_1"/>
    <property type="match status" value="1"/>
</dbReference>
<dbReference type="PROSITE" id="PS51407">
    <property type="entry name" value="LAMP_3"/>
    <property type="match status" value="1"/>
</dbReference>